<organism>
    <name type="scientific">Thermoanaerobacter ethanolicus</name>
    <name type="common">Clostridium thermohydrosulfuricum</name>
    <dbReference type="NCBI Taxonomy" id="1757"/>
    <lineage>
        <taxon>Bacteria</taxon>
        <taxon>Bacillati</taxon>
        <taxon>Bacillota</taxon>
        <taxon>Clostridia</taxon>
        <taxon>Thermoanaerobacterales</taxon>
        <taxon>Thermoanaerobacteraceae</taxon>
        <taxon>Thermoanaerobacter</taxon>
    </lineage>
</organism>
<proteinExistence type="evidence at protein level"/>
<sequence length="399" mass="43241">MWETKINPNKVFELRCKNTTYFGIGSIKKIKDILEVLKNKGINNVILVTGKGSYKASGAWDVVKPALETLGFKYSLYDKVGPNPTVDMIDEAAKIGRETGAKAVIGIGGGSPIDTAKSVAVLLEYTDKNARELYEQKFIPEKAAPIIAINLTHGTGTEVDRFAVATIPEKNYKPAIAYDCLYPMYAIDDPSLMTKLDKKQTIAVTIDALNHVTEAATTLVASPYSVLMAKETVRLIVRYLPAAVNDPENLVARYYLLYASALAGISFDNGLLHLTHALEHPLSAVKPEIAHGLGLGAILPAVVKAIYPSVAEVLAEVYSPIVPGLKGLPAEAEYVAKKVEEWLFKVGCTQKLSDFGFTKEDIPTLVRLAKTTPSLDGLLSNAPVEATEAVIAKIYEESF</sequence>
<dbReference type="EC" id="1.1.1.2"/>
<dbReference type="EMBL" id="AF178965">
    <property type="protein sequence ID" value="AAG01186.1"/>
    <property type="molecule type" value="Genomic_DNA"/>
</dbReference>
<dbReference type="SMR" id="Q9F282"/>
<dbReference type="GO" id="GO:0004022">
    <property type="term" value="F:alcohol dehydrogenase (NAD+) activity"/>
    <property type="evidence" value="ECO:0007669"/>
    <property type="project" value="TreeGrafter"/>
</dbReference>
<dbReference type="GO" id="GO:0008106">
    <property type="term" value="F:alcohol dehydrogenase (NADP+) activity"/>
    <property type="evidence" value="ECO:0007669"/>
    <property type="project" value="UniProtKB-EC"/>
</dbReference>
<dbReference type="GO" id="GO:0046872">
    <property type="term" value="F:metal ion binding"/>
    <property type="evidence" value="ECO:0007669"/>
    <property type="project" value="InterPro"/>
</dbReference>
<dbReference type="CDD" id="cd08186">
    <property type="entry name" value="Fe-ADH-like"/>
    <property type="match status" value="1"/>
</dbReference>
<dbReference type="FunFam" id="3.40.50.1970:FF:000003">
    <property type="entry name" value="Alcohol dehydrogenase, iron-containing"/>
    <property type="match status" value="1"/>
</dbReference>
<dbReference type="Gene3D" id="3.40.50.1970">
    <property type="match status" value="1"/>
</dbReference>
<dbReference type="Gene3D" id="1.20.1090.10">
    <property type="entry name" value="Dehydroquinate synthase-like - alpha domain"/>
    <property type="match status" value="1"/>
</dbReference>
<dbReference type="InterPro" id="IPR001670">
    <property type="entry name" value="ADH_Fe/GldA"/>
</dbReference>
<dbReference type="InterPro" id="IPR056798">
    <property type="entry name" value="ADH_Fe_C"/>
</dbReference>
<dbReference type="InterPro" id="IPR045910">
    <property type="entry name" value="AdhA-like"/>
</dbReference>
<dbReference type="InterPro" id="IPR039697">
    <property type="entry name" value="Alcohol_dehydrogenase_Fe"/>
</dbReference>
<dbReference type="PANTHER" id="PTHR11496">
    <property type="entry name" value="ALCOHOL DEHYDROGENASE"/>
    <property type="match status" value="1"/>
</dbReference>
<dbReference type="PANTHER" id="PTHR11496:SF102">
    <property type="entry name" value="ALCOHOL DEHYDROGENASE 4"/>
    <property type="match status" value="1"/>
</dbReference>
<dbReference type="Pfam" id="PF25137">
    <property type="entry name" value="ADH_Fe_C"/>
    <property type="match status" value="1"/>
</dbReference>
<dbReference type="Pfam" id="PF00465">
    <property type="entry name" value="Fe-ADH"/>
    <property type="match status" value="1"/>
</dbReference>
<dbReference type="SUPFAM" id="SSF56796">
    <property type="entry name" value="Dehydroquinate synthase-like"/>
    <property type="match status" value="1"/>
</dbReference>
<evidence type="ECO:0000269" key="1">
    <source>
    </source>
</evidence>
<evidence type="ECO:0000305" key="2"/>
<feature type="chain" id="PRO_0000424547" description="Long-chain primary alcohol dehydrogenase AdhA">
    <location>
        <begin position="1"/>
        <end position="399"/>
    </location>
</feature>
<protein>
    <recommendedName>
        <fullName>Long-chain primary alcohol dehydrogenase AdhA</fullName>
        <ecNumber>1.1.1.2</ecNumber>
    </recommendedName>
</protein>
<gene>
    <name type="primary">adhA</name>
</gene>
<reference key="1">
    <citation type="journal article" date="2000" name="FEMS Microbiol. Lett.">
        <title>Cloning, sequencing and expression in Escherichia coli of the primary alcohol dehydrogenase gene from Thermoanaerobacter ethanolicus JW200.</title>
        <authorList>
            <person name="Holt P.J."/>
            <person name="Williams R.E."/>
            <person name="Jordan K.N."/>
            <person name="Lowe C.R."/>
            <person name="Bruce N.C."/>
        </authorList>
    </citation>
    <scope>NUCLEOTIDE SEQUENCE [GENOMIC DNA]</scope>
    <scope>PROTEIN SEQUENCE OF 1-15 AND 171-179</scope>
    <scope>FUNCTION</scope>
    <scope>CATALYTIC ACTIVITY</scope>
    <scope>COFACTOR</scope>
    <scope>SUBSTRATE SPECIFICITY</scope>
    <scope>TEMPERATURE DEPENDENCE</scope>
    <scope>INDUCTION</scope>
    <scope>SUBUNIT</scope>
    <source>
        <strain>ATCC 31550 / DSM 2246 / JW 200</strain>
    </source>
</reference>
<accession>Q9F282</accession>
<comment type="function">
    <text evidence="1">Alcohol dehydrogenase active against primary long-chain alcohols. Pentan-1-ol is the optimum substrate in vitro, but also shows efficient dehydrogenase activity on propanol, hexanol, and ethanol.</text>
</comment>
<comment type="catalytic activity">
    <reaction evidence="1">
        <text>a primary alcohol + NADP(+) = an aldehyde + NADPH + H(+)</text>
        <dbReference type="Rhea" id="RHEA:15937"/>
        <dbReference type="ChEBI" id="CHEBI:15378"/>
        <dbReference type="ChEBI" id="CHEBI:15734"/>
        <dbReference type="ChEBI" id="CHEBI:17478"/>
        <dbReference type="ChEBI" id="CHEBI:57783"/>
        <dbReference type="ChEBI" id="CHEBI:58349"/>
        <dbReference type="EC" id="1.1.1.2"/>
    </reaction>
</comment>
<comment type="cofactor">
    <cofactor evidence="1">
        <name>Zn(2+)</name>
        <dbReference type="ChEBI" id="CHEBI:29105"/>
    </cofactor>
</comment>
<comment type="biophysicochemical properties">
    <temperatureDependence>
        <text evidence="1">Thermostable. Heating at 70 degrees Celsius for 180 minutes gives no observable loss of enzymatic activity.</text>
    </temperatureDependence>
</comment>
<comment type="subunit">
    <text evidence="1">Homotetramer.</text>
</comment>
<comment type="induction">
    <text evidence="1">Seems to be constitutively expressed.</text>
</comment>
<comment type="similarity">
    <text evidence="2">Belongs to the iron-containing alcohol dehydrogenase family.</text>
</comment>
<name>ADHA_THEET</name>
<keyword id="KW-0903">Direct protein sequencing</keyword>
<keyword id="KW-0521">NADP</keyword>
<keyword id="KW-0560">Oxidoreductase</keyword>
<keyword id="KW-0862">Zinc</keyword>